<name>YCU4_CAEEL</name>
<feature type="chain" id="PRO_0000193994" description="UPF0057 membrane protein T23F2.4">
    <location>
        <begin position="1"/>
        <end position="57"/>
    </location>
</feature>
<feature type="transmembrane region" description="Helical" evidence="1">
    <location>
        <begin position="3"/>
        <end position="23"/>
    </location>
</feature>
<feature type="transmembrane region" description="Helical" evidence="1">
    <location>
        <begin position="36"/>
        <end position="56"/>
    </location>
</feature>
<proteinExistence type="inferred from homology"/>
<gene>
    <name type="ORF">T23F2.4</name>
</gene>
<sequence length="57" mass="6299">MAITCMDIPKFLFALLLPPVGVFLEKGCTHHLAICILLTILGYIPGIIYACYIILAY</sequence>
<dbReference type="EMBL" id="FO080954">
    <property type="protein sequence ID" value="CCD68069.1"/>
    <property type="molecule type" value="Genomic_DNA"/>
</dbReference>
<dbReference type="PIR" id="T16929">
    <property type="entry name" value="T16929"/>
</dbReference>
<dbReference type="RefSeq" id="NP_508935.2">
    <property type="nucleotide sequence ID" value="NM_076534.5"/>
</dbReference>
<dbReference type="SMR" id="Q22701"/>
<dbReference type="FunCoup" id="Q22701">
    <property type="interactions" value="17"/>
</dbReference>
<dbReference type="STRING" id="6239.T23F2.4.1"/>
<dbReference type="PaxDb" id="6239-T23F2.4"/>
<dbReference type="PeptideAtlas" id="Q22701"/>
<dbReference type="EnsemblMetazoa" id="T23F2.4.1">
    <property type="protein sequence ID" value="T23F2.4.1"/>
    <property type="gene ID" value="WBGene00020737"/>
</dbReference>
<dbReference type="GeneID" id="188806"/>
<dbReference type="KEGG" id="cel:CELE_T23F2.4"/>
<dbReference type="UCSC" id="T23F2.4">
    <property type="organism name" value="c. elegans"/>
</dbReference>
<dbReference type="AGR" id="WB:WBGene00020737"/>
<dbReference type="CTD" id="188806"/>
<dbReference type="WormBase" id="T23F2.4">
    <property type="protein sequence ID" value="CE39781"/>
    <property type="gene ID" value="WBGene00020737"/>
</dbReference>
<dbReference type="eggNOG" id="KOG1773">
    <property type="taxonomic scope" value="Eukaryota"/>
</dbReference>
<dbReference type="GeneTree" id="ENSGT00970000196157"/>
<dbReference type="HOGENOM" id="CLU_107649_6_2_1"/>
<dbReference type="InParanoid" id="Q22701"/>
<dbReference type="OMA" id="STATFCE"/>
<dbReference type="OrthoDB" id="2802411at2759"/>
<dbReference type="PhylomeDB" id="Q22701"/>
<dbReference type="PRO" id="PR:Q22701"/>
<dbReference type="Proteomes" id="UP000001940">
    <property type="component" value="Chromosome X"/>
</dbReference>
<dbReference type="Bgee" id="WBGene00020737">
    <property type="expression patterns" value="Expressed in pharyngeal muscle cell (C elegans) and 3 other cell types or tissues"/>
</dbReference>
<dbReference type="GO" id="GO:0016020">
    <property type="term" value="C:membrane"/>
    <property type="evidence" value="ECO:0007669"/>
    <property type="project" value="UniProtKB-SubCell"/>
</dbReference>
<dbReference type="InterPro" id="IPR000612">
    <property type="entry name" value="PMP3"/>
</dbReference>
<dbReference type="PANTHER" id="PTHR21659">
    <property type="entry name" value="HYDROPHOBIC PROTEIN RCI2 LOW TEMPERATURE AND SALT RESPONSIVE PROTEIN LTI6 -RELATED"/>
    <property type="match status" value="1"/>
</dbReference>
<dbReference type="PANTHER" id="PTHR21659:SF5">
    <property type="entry name" value="UPF0057 MEMBRANE PROTEIN T23F2.3-RELATED"/>
    <property type="match status" value="1"/>
</dbReference>
<dbReference type="Pfam" id="PF01679">
    <property type="entry name" value="Pmp3"/>
    <property type="match status" value="1"/>
</dbReference>
<dbReference type="PROSITE" id="PS01309">
    <property type="entry name" value="UPF0057"/>
    <property type="match status" value="1"/>
</dbReference>
<protein>
    <recommendedName>
        <fullName>UPF0057 membrane protein T23F2.4</fullName>
    </recommendedName>
</protein>
<accession>Q22701</accession>
<keyword id="KW-0472">Membrane</keyword>
<keyword id="KW-1185">Reference proteome</keyword>
<keyword id="KW-0812">Transmembrane</keyword>
<keyword id="KW-1133">Transmembrane helix</keyword>
<reference key="1">
    <citation type="journal article" date="1998" name="Science">
        <title>Genome sequence of the nematode C. elegans: a platform for investigating biology.</title>
        <authorList>
            <consortium name="The C. elegans sequencing consortium"/>
        </authorList>
    </citation>
    <scope>NUCLEOTIDE SEQUENCE [LARGE SCALE GENOMIC DNA]</scope>
    <source>
        <strain>Bristol N2</strain>
    </source>
</reference>
<evidence type="ECO:0000255" key="1"/>
<evidence type="ECO:0000305" key="2"/>
<comment type="subcellular location">
    <subcellularLocation>
        <location evidence="2">Membrane</location>
        <topology evidence="2">Multi-pass membrane protein</topology>
    </subcellularLocation>
</comment>
<comment type="similarity">
    <text evidence="2">Belongs to the UPF0057 (PMP3) family.</text>
</comment>
<organism>
    <name type="scientific">Caenorhabditis elegans</name>
    <dbReference type="NCBI Taxonomy" id="6239"/>
    <lineage>
        <taxon>Eukaryota</taxon>
        <taxon>Metazoa</taxon>
        <taxon>Ecdysozoa</taxon>
        <taxon>Nematoda</taxon>
        <taxon>Chromadorea</taxon>
        <taxon>Rhabditida</taxon>
        <taxon>Rhabditina</taxon>
        <taxon>Rhabditomorpha</taxon>
        <taxon>Rhabditoidea</taxon>
        <taxon>Rhabditidae</taxon>
        <taxon>Peloderinae</taxon>
        <taxon>Caenorhabditis</taxon>
    </lineage>
</organism>